<feature type="chain" id="PRO_0000239967" description="Vomeronasal type-1 receptor A11">
    <location>
        <begin position="1"/>
        <end position="318"/>
    </location>
</feature>
<feature type="topological domain" description="Extracellular" evidence="1">
    <location>
        <begin position="1"/>
        <end position="32"/>
    </location>
</feature>
<feature type="transmembrane region" description="Helical; Name=1" evidence="1">
    <location>
        <begin position="33"/>
        <end position="53"/>
    </location>
</feature>
<feature type="topological domain" description="Cytoplasmic" evidence="1">
    <location>
        <begin position="54"/>
        <end position="65"/>
    </location>
</feature>
<feature type="transmembrane region" description="Helical; Name=2" evidence="1">
    <location>
        <begin position="66"/>
        <end position="86"/>
    </location>
</feature>
<feature type="topological domain" description="Extracellular" evidence="1">
    <location>
        <begin position="87"/>
        <end position="101"/>
    </location>
</feature>
<feature type="transmembrane region" description="Helical; Name=3" evidence="1">
    <location>
        <begin position="102"/>
        <end position="118"/>
    </location>
</feature>
<feature type="topological domain" description="Cytoplasmic" evidence="1">
    <location>
        <begin position="119"/>
        <end position="147"/>
    </location>
</feature>
<feature type="transmembrane region" description="Helical; Name=4" evidence="1">
    <location>
        <begin position="148"/>
        <end position="168"/>
    </location>
</feature>
<feature type="topological domain" description="Extracellular" evidence="1">
    <location>
        <begin position="169"/>
        <end position="206"/>
    </location>
</feature>
<feature type="transmembrane region" description="Helical; Name=5" evidence="1">
    <location>
        <begin position="207"/>
        <end position="227"/>
    </location>
</feature>
<feature type="topological domain" description="Cytoplasmic" evidence="1">
    <location>
        <begin position="228"/>
        <end position="254"/>
    </location>
</feature>
<feature type="transmembrane region" description="Helical; Name=6" evidence="1">
    <location>
        <begin position="255"/>
        <end position="275"/>
    </location>
</feature>
<feature type="topological domain" description="Extracellular" evidence="1">
    <location>
        <begin position="276"/>
        <end position="285"/>
    </location>
</feature>
<feature type="transmembrane region" description="Helical; Name=7" evidence="1">
    <location>
        <begin position="286"/>
        <end position="306"/>
    </location>
</feature>
<feature type="topological domain" description="Cytoplasmic" evidence="1">
    <location>
        <begin position="307"/>
        <end position="318"/>
    </location>
</feature>
<feature type="glycosylation site" description="N-linked (GlcNAc...) asparagine" evidence="1">
    <location>
        <position position="175"/>
    </location>
</feature>
<feature type="disulfide bond" evidence="2">
    <location>
        <begin position="101"/>
        <end position="188"/>
    </location>
</feature>
<keyword id="KW-1003">Cell membrane</keyword>
<keyword id="KW-1015">Disulfide bond</keyword>
<keyword id="KW-0297">G-protein coupled receptor</keyword>
<keyword id="KW-0325">Glycoprotein</keyword>
<keyword id="KW-0472">Membrane</keyword>
<keyword id="KW-0589">Pheromone response</keyword>
<keyword id="KW-0675">Receptor</keyword>
<keyword id="KW-1185">Reference proteome</keyword>
<keyword id="KW-0807">Transducer</keyword>
<keyword id="KW-0812">Transmembrane</keyword>
<keyword id="KW-1133">Transmembrane helix</keyword>
<evidence type="ECO:0000255" key="1"/>
<evidence type="ECO:0000255" key="2">
    <source>
        <dbReference type="PROSITE-ProRule" id="PRU00521"/>
    </source>
</evidence>
<evidence type="ECO:0000269" key="3">
    <source>
    </source>
</evidence>
<evidence type="ECO:0000305" key="4"/>
<evidence type="ECO:0000312" key="5">
    <source>
        <dbReference type="EMBL" id="AAL47869.1"/>
    </source>
</evidence>
<accession>Q8R2E6</accession>
<comment type="function">
    <text evidence="3">Putative pheromone receptor implicated in the regulation of social and reproductive behavior.</text>
</comment>
<comment type="subcellular location">
    <subcellularLocation>
        <location evidence="4">Cell membrane</location>
        <topology evidence="1">Multi-pass membrane protein</topology>
    </subcellularLocation>
</comment>
<comment type="disruption phenotype">
    <text evidence="3">Mice lacking all but one V1ra and V1rb gene (12% of the V1r repertoire) show a lack of chemosensory response to a subset of known pheromonal ligands and changes in maternal aggression as well as male reproductive behavior.</text>
</comment>
<comment type="similarity">
    <text evidence="2">Belongs to the G-protein coupled receptor 1 family.</text>
</comment>
<sequence length="318" mass="36003">MSEILFFSPQPLFSHMMNKNSRLHTHSNIKNTFFSEIGIGISGNSFLLLFHILKFIRGHRPRLTDLPIGLLSLIHLLMLLLMAFIATDIFISRRGWDGIICKFLVYLYGVLRGLSLCTTSMLSVLQAIILSPRSSCLAKLKHKSPHHISCAIIFLSVLYMLISSHILLSITATPNLTMNDFLYVSQSCSLLPLSYLVQSMYSTLLALREVFLISLMVLSTLYMVVLLCRHRKQAQHLQGTSLSPKASAEQRATQTILMLMTFFVLMSIFDSIVSCSRTMFLDDPTSYSIHIFVMHIYATVSPFVFMSTEKHIVNILRG</sequence>
<name>V1A11_MOUSE</name>
<organism>
    <name type="scientific">Mus musculus</name>
    <name type="common">Mouse</name>
    <dbReference type="NCBI Taxonomy" id="10090"/>
    <lineage>
        <taxon>Eukaryota</taxon>
        <taxon>Metazoa</taxon>
        <taxon>Chordata</taxon>
        <taxon>Craniata</taxon>
        <taxon>Vertebrata</taxon>
        <taxon>Euteleostomi</taxon>
        <taxon>Mammalia</taxon>
        <taxon>Eutheria</taxon>
        <taxon>Euarchontoglires</taxon>
        <taxon>Glires</taxon>
        <taxon>Rodentia</taxon>
        <taxon>Myomorpha</taxon>
        <taxon>Muroidea</taxon>
        <taxon>Muridae</taxon>
        <taxon>Murinae</taxon>
        <taxon>Mus</taxon>
        <taxon>Mus</taxon>
    </lineage>
</organism>
<dbReference type="EMBL" id="AY065464">
    <property type="protein sequence ID" value="AAL47869.1"/>
    <property type="molecule type" value="Genomic_DNA"/>
</dbReference>
<dbReference type="SMR" id="Q8R2E6"/>
<dbReference type="GlyCosmos" id="Q8R2E6">
    <property type="glycosylation" value="1 site, No reported glycans"/>
</dbReference>
<dbReference type="GlyGen" id="Q8R2E6">
    <property type="glycosylation" value="1 site"/>
</dbReference>
<dbReference type="InParanoid" id="Q8R2E6"/>
<dbReference type="PhylomeDB" id="Q8R2E6"/>
<dbReference type="Proteomes" id="UP000000589">
    <property type="component" value="Unplaced"/>
</dbReference>
<dbReference type="RNAct" id="Q8R2E6">
    <property type="molecule type" value="protein"/>
</dbReference>
<dbReference type="GO" id="GO:0005886">
    <property type="term" value="C:plasma membrane"/>
    <property type="evidence" value="ECO:0007669"/>
    <property type="project" value="UniProtKB-SubCell"/>
</dbReference>
<dbReference type="GO" id="GO:0016503">
    <property type="term" value="F:pheromone receptor activity"/>
    <property type="evidence" value="ECO:0007669"/>
    <property type="project" value="InterPro"/>
</dbReference>
<dbReference type="GO" id="GO:0019236">
    <property type="term" value="P:response to pheromone"/>
    <property type="evidence" value="ECO:0007669"/>
    <property type="project" value="UniProtKB-KW"/>
</dbReference>
<dbReference type="GO" id="GO:0007606">
    <property type="term" value="P:sensory perception of chemical stimulus"/>
    <property type="evidence" value="ECO:0007669"/>
    <property type="project" value="UniProtKB-ARBA"/>
</dbReference>
<dbReference type="CDD" id="cd13949">
    <property type="entry name" value="7tm_V1R_pheromone"/>
    <property type="match status" value="1"/>
</dbReference>
<dbReference type="FunFam" id="1.20.1070.10:FF:000051">
    <property type="entry name" value="Vomeronasal type-1 receptor"/>
    <property type="match status" value="1"/>
</dbReference>
<dbReference type="Gene3D" id="1.20.1070.10">
    <property type="entry name" value="Rhodopsin 7-helix transmembrane proteins"/>
    <property type="match status" value="1"/>
</dbReference>
<dbReference type="InterPro" id="IPR017452">
    <property type="entry name" value="GPCR_Rhodpsn_7TM"/>
</dbReference>
<dbReference type="InterPro" id="IPR004072">
    <property type="entry name" value="Vmron_rcpt_1"/>
</dbReference>
<dbReference type="PANTHER" id="PTHR24062">
    <property type="entry name" value="VOMERONASAL TYPE-1 RECEPTOR"/>
    <property type="match status" value="1"/>
</dbReference>
<dbReference type="Pfam" id="PF03402">
    <property type="entry name" value="V1R"/>
    <property type="match status" value="1"/>
</dbReference>
<dbReference type="PRINTS" id="PR01534">
    <property type="entry name" value="VOMERONASL1R"/>
</dbReference>
<dbReference type="SUPFAM" id="SSF81321">
    <property type="entry name" value="Family A G protein-coupled receptor-like"/>
    <property type="match status" value="1"/>
</dbReference>
<dbReference type="PROSITE" id="PS50262">
    <property type="entry name" value="G_PROTEIN_RECEP_F1_2"/>
    <property type="match status" value="1"/>
</dbReference>
<gene>
    <name evidence="5" type="primary">V1ra11</name>
</gene>
<protein>
    <recommendedName>
        <fullName>Vomeronasal type-1 receptor A11</fullName>
    </recommendedName>
</protein>
<reference evidence="5" key="1">
    <citation type="journal article" date="2002" name="Nat. Neurosci.">
        <title>Multiple new and isolated families within the mouse superfamily of V1r vomeronasal receptors.</title>
        <authorList>
            <person name="Rodriguez I."/>
            <person name="Del Punta K."/>
            <person name="Rothman A."/>
            <person name="Ishii T."/>
            <person name="Mombaerts P."/>
        </authorList>
    </citation>
    <scope>NUCLEOTIDE SEQUENCE [GENOMIC DNA]</scope>
</reference>
<reference evidence="4" key="2">
    <citation type="journal article" date="2002" name="Nature">
        <title>Deficient pheromone responses in mice lacking a cluster of vomeronasal receptor genes.</title>
        <authorList>
            <person name="Del Punta K."/>
            <person name="Leinders-Zufall T."/>
            <person name="Rodriguez I."/>
            <person name="Jukam D."/>
            <person name="Wysocki C.J."/>
            <person name="Ogawa S."/>
            <person name="Zufall F."/>
            <person name="Mombaerts P."/>
        </authorList>
    </citation>
    <scope>PUTATIVE FUNCTION</scope>
    <scope>DISRUPTION PHENOTYPE</scope>
</reference>
<proteinExistence type="inferred from homology"/>